<dbReference type="EC" id="3.6.1.7"/>
<dbReference type="EMBL" id="CP000746">
    <property type="protein sequence ID" value="ABR74371.1"/>
    <property type="molecule type" value="Genomic_DNA"/>
</dbReference>
<dbReference type="RefSeq" id="WP_012072748.1">
    <property type="nucleotide sequence ID" value="NC_009655.1"/>
</dbReference>
<dbReference type="SMR" id="A6VN24"/>
<dbReference type="STRING" id="339671.Asuc_1003"/>
<dbReference type="KEGG" id="asu:Asuc_1003"/>
<dbReference type="eggNOG" id="COG1254">
    <property type="taxonomic scope" value="Bacteria"/>
</dbReference>
<dbReference type="HOGENOM" id="CLU_141932_2_1_6"/>
<dbReference type="OrthoDB" id="5295388at2"/>
<dbReference type="Proteomes" id="UP000001114">
    <property type="component" value="Chromosome"/>
</dbReference>
<dbReference type="GO" id="GO:0003998">
    <property type="term" value="F:acylphosphatase activity"/>
    <property type="evidence" value="ECO:0007669"/>
    <property type="project" value="UniProtKB-EC"/>
</dbReference>
<dbReference type="Gene3D" id="3.30.70.100">
    <property type="match status" value="1"/>
</dbReference>
<dbReference type="InterPro" id="IPR020456">
    <property type="entry name" value="Acylphosphatase"/>
</dbReference>
<dbReference type="InterPro" id="IPR001792">
    <property type="entry name" value="Acylphosphatase-like_dom"/>
</dbReference>
<dbReference type="InterPro" id="IPR036046">
    <property type="entry name" value="Acylphosphatase-like_dom_sf"/>
</dbReference>
<dbReference type="InterPro" id="IPR017968">
    <property type="entry name" value="Acylphosphatase_CS"/>
</dbReference>
<dbReference type="NCBIfam" id="NF011000">
    <property type="entry name" value="PRK14426.1"/>
    <property type="match status" value="1"/>
</dbReference>
<dbReference type="NCBIfam" id="NF011019">
    <property type="entry name" value="PRK14448.1"/>
    <property type="match status" value="1"/>
</dbReference>
<dbReference type="PANTHER" id="PTHR47268">
    <property type="entry name" value="ACYLPHOSPHATASE"/>
    <property type="match status" value="1"/>
</dbReference>
<dbReference type="PANTHER" id="PTHR47268:SF4">
    <property type="entry name" value="ACYLPHOSPHATASE"/>
    <property type="match status" value="1"/>
</dbReference>
<dbReference type="Pfam" id="PF00708">
    <property type="entry name" value="Acylphosphatase"/>
    <property type="match status" value="1"/>
</dbReference>
<dbReference type="PRINTS" id="PR00112">
    <property type="entry name" value="ACYLPHPHTASE"/>
</dbReference>
<dbReference type="SUPFAM" id="SSF54975">
    <property type="entry name" value="Acylphosphatase/BLUF domain-like"/>
    <property type="match status" value="1"/>
</dbReference>
<dbReference type="PROSITE" id="PS00150">
    <property type="entry name" value="ACYLPHOSPHATASE_1"/>
    <property type="match status" value="1"/>
</dbReference>
<dbReference type="PROSITE" id="PS00151">
    <property type="entry name" value="ACYLPHOSPHATASE_2"/>
    <property type="match status" value="1"/>
</dbReference>
<dbReference type="PROSITE" id="PS51160">
    <property type="entry name" value="ACYLPHOSPHATASE_3"/>
    <property type="match status" value="1"/>
</dbReference>
<proteinExistence type="inferred from homology"/>
<gene>
    <name type="primary">acyP</name>
    <name type="ordered locus">Asuc_1003</name>
</gene>
<name>ACYP_ACTSZ</name>
<sequence>MIQRQFTVYGCVQGVGFRFFTAREANKLGIQGYVKNQADGSVRVVAAGSDRQVAAFRDWLEQGPPTAEVTNLLEQEYTGGRVFSDFTIER</sequence>
<evidence type="ECO:0000255" key="1">
    <source>
        <dbReference type="PROSITE-ProRule" id="PRU00520"/>
    </source>
</evidence>
<evidence type="ECO:0000305" key="2"/>
<feature type="chain" id="PRO_0000326643" description="Acylphosphatase">
    <location>
        <begin position="1"/>
        <end position="90"/>
    </location>
</feature>
<feature type="domain" description="Acylphosphatase-like" evidence="1">
    <location>
        <begin position="3"/>
        <end position="90"/>
    </location>
</feature>
<feature type="active site" evidence="1">
    <location>
        <position position="18"/>
    </location>
</feature>
<feature type="active site" evidence="1">
    <location>
        <position position="36"/>
    </location>
</feature>
<protein>
    <recommendedName>
        <fullName>Acylphosphatase</fullName>
        <ecNumber>3.6.1.7</ecNumber>
    </recommendedName>
    <alternativeName>
        <fullName>Acylphosphate phosphohydrolase</fullName>
    </alternativeName>
</protein>
<keyword id="KW-0378">Hydrolase</keyword>
<keyword id="KW-1185">Reference proteome</keyword>
<comment type="catalytic activity">
    <reaction>
        <text>an acyl phosphate + H2O = a carboxylate + phosphate + H(+)</text>
        <dbReference type="Rhea" id="RHEA:14965"/>
        <dbReference type="ChEBI" id="CHEBI:15377"/>
        <dbReference type="ChEBI" id="CHEBI:15378"/>
        <dbReference type="ChEBI" id="CHEBI:29067"/>
        <dbReference type="ChEBI" id="CHEBI:43474"/>
        <dbReference type="ChEBI" id="CHEBI:59918"/>
        <dbReference type="EC" id="3.6.1.7"/>
    </reaction>
</comment>
<comment type="similarity">
    <text evidence="2">Belongs to the acylphosphatase family.</text>
</comment>
<accession>A6VN24</accession>
<organism>
    <name type="scientific">Actinobacillus succinogenes (strain ATCC 55618 / DSM 22257 / CCUG 43843 / 130Z)</name>
    <dbReference type="NCBI Taxonomy" id="339671"/>
    <lineage>
        <taxon>Bacteria</taxon>
        <taxon>Pseudomonadati</taxon>
        <taxon>Pseudomonadota</taxon>
        <taxon>Gammaproteobacteria</taxon>
        <taxon>Pasteurellales</taxon>
        <taxon>Pasteurellaceae</taxon>
        <taxon>Actinobacillus</taxon>
    </lineage>
</organism>
<reference key="1">
    <citation type="journal article" date="2010" name="BMC Genomics">
        <title>A genomic perspective on the potential of Actinobacillus succinogenes for industrial succinate production.</title>
        <authorList>
            <person name="McKinlay J.B."/>
            <person name="Laivenieks M."/>
            <person name="Schindler B.D."/>
            <person name="McKinlay A.A."/>
            <person name="Siddaramappa S."/>
            <person name="Challacombe J.F."/>
            <person name="Lowry S.R."/>
            <person name="Clum A."/>
            <person name="Lapidus A.L."/>
            <person name="Burkhart K.B."/>
            <person name="Harkins V."/>
            <person name="Vieille C."/>
        </authorList>
    </citation>
    <scope>NUCLEOTIDE SEQUENCE [LARGE SCALE GENOMIC DNA]</scope>
    <source>
        <strain>ATCC 55618 / DSM 22257 / CCUG 43843 / 130Z</strain>
    </source>
</reference>